<organism>
    <name type="scientific">Helicobacter pylori (strain P12)</name>
    <dbReference type="NCBI Taxonomy" id="570508"/>
    <lineage>
        <taxon>Bacteria</taxon>
        <taxon>Pseudomonadati</taxon>
        <taxon>Campylobacterota</taxon>
        <taxon>Epsilonproteobacteria</taxon>
        <taxon>Campylobacterales</taxon>
        <taxon>Helicobacteraceae</taxon>
        <taxon>Helicobacter</taxon>
    </lineage>
</organism>
<accession>B6JPA8</accession>
<keyword id="KW-0143">Chaperone</keyword>
<keyword id="KW-0963">Cytoplasm</keyword>
<name>CH10_HELP2</name>
<sequence>MKFQPLGERVLVERLEEENKTSSGIIIPDNAKEKPLMGVVKAVSHKISEGCKCVKEGDVIAFGKYKGTEIVLDGTEYMVLELEDILGIVGSGSCCHTGNHDHKHAKEHEACCHDHKKH</sequence>
<evidence type="ECO:0000255" key="1">
    <source>
        <dbReference type="HAMAP-Rule" id="MF_00580"/>
    </source>
</evidence>
<proteinExistence type="inferred from homology"/>
<feature type="chain" id="PRO_1000129668" description="Co-chaperonin GroES">
    <location>
        <begin position="1"/>
        <end position="118"/>
    </location>
</feature>
<gene>
    <name evidence="1" type="primary">groES</name>
    <name evidence="1" type="synonym">groS</name>
    <name type="ordered locus">HPP12_0009</name>
</gene>
<reference key="1">
    <citation type="submission" date="2008-10" db="EMBL/GenBank/DDBJ databases">
        <title>The complete genome sequence of Helicobacter pylori strain P12.</title>
        <authorList>
            <person name="Fischer W."/>
            <person name="Windhager L."/>
            <person name="Karnholz A."/>
            <person name="Zeiller M."/>
            <person name="Zimmer R."/>
            <person name="Haas R."/>
        </authorList>
    </citation>
    <scope>NUCLEOTIDE SEQUENCE [LARGE SCALE GENOMIC DNA]</scope>
    <source>
        <strain>P12</strain>
    </source>
</reference>
<comment type="function">
    <text evidence="1">Together with the chaperonin GroEL, plays an essential role in assisting protein folding. The GroEL-GroES system forms a nano-cage that allows encapsulation of the non-native substrate proteins and provides a physical environment optimized to promote and accelerate protein folding. GroES binds to the apical surface of the GroEL ring, thereby capping the opening of the GroEL channel.</text>
</comment>
<comment type="subunit">
    <text evidence="1">Heptamer of 7 subunits arranged in a ring. Interacts with the chaperonin GroEL.</text>
</comment>
<comment type="subcellular location">
    <subcellularLocation>
        <location evidence="1">Cytoplasm</location>
    </subcellularLocation>
</comment>
<comment type="similarity">
    <text evidence="1">Belongs to the GroES chaperonin family.</text>
</comment>
<protein>
    <recommendedName>
        <fullName evidence="1">Co-chaperonin GroES</fullName>
    </recommendedName>
    <alternativeName>
        <fullName evidence="1">10 kDa chaperonin</fullName>
    </alternativeName>
    <alternativeName>
        <fullName evidence="1">Chaperonin-10</fullName>
        <shortName evidence="1">Cpn10</shortName>
    </alternativeName>
</protein>
<dbReference type="EMBL" id="CP001217">
    <property type="protein sequence ID" value="ACJ07169.1"/>
    <property type="molecule type" value="Genomic_DNA"/>
</dbReference>
<dbReference type="SMR" id="B6JPA8"/>
<dbReference type="KEGG" id="hpp:HPP12_0009"/>
<dbReference type="HOGENOM" id="CLU_132825_2_0_7"/>
<dbReference type="Proteomes" id="UP000008198">
    <property type="component" value="Chromosome"/>
</dbReference>
<dbReference type="GO" id="GO:0005737">
    <property type="term" value="C:cytoplasm"/>
    <property type="evidence" value="ECO:0007669"/>
    <property type="project" value="UniProtKB-SubCell"/>
</dbReference>
<dbReference type="GO" id="GO:0005524">
    <property type="term" value="F:ATP binding"/>
    <property type="evidence" value="ECO:0007669"/>
    <property type="project" value="InterPro"/>
</dbReference>
<dbReference type="GO" id="GO:0046872">
    <property type="term" value="F:metal ion binding"/>
    <property type="evidence" value="ECO:0007669"/>
    <property type="project" value="TreeGrafter"/>
</dbReference>
<dbReference type="GO" id="GO:0044183">
    <property type="term" value="F:protein folding chaperone"/>
    <property type="evidence" value="ECO:0007669"/>
    <property type="project" value="InterPro"/>
</dbReference>
<dbReference type="GO" id="GO:0051087">
    <property type="term" value="F:protein-folding chaperone binding"/>
    <property type="evidence" value="ECO:0007669"/>
    <property type="project" value="TreeGrafter"/>
</dbReference>
<dbReference type="GO" id="GO:0051082">
    <property type="term" value="F:unfolded protein binding"/>
    <property type="evidence" value="ECO:0007669"/>
    <property type="project" value="TreeGrafter"/>
</dbReference>
<dbReference type="GO" id="GO:0051085">
    <property type="term" value="P:chaperone cofactor-dependent protein refolding"/>
    <property type="evidence" value="ECO:0007669"/>
    <property type="project" value="TreeGrafter"/>
</dbReference>
<dbReference type="CDD" id="cd00320">
    <property type="entry name" value="cpn10"/>
    <property type="match status" value="1"/>
</dbReference>
<dbReference type="FunFam" id="2.30.33.40:FF:000009">
    <property type="entry name" value="10 kDa chaperonin"/>
    <property type="match status" value="1"/>
</dbReference>
<dbReference type="Gene3D" id="2.30.33.40">
    <property type="entry name" value="GroES chaperonin"/>
    <property type="match status" value="1"/>
</dbReference>
<dbReference type="HAMAP" id="MF_00580">
    <property type="entry name" value="CH10"/>
    <property type="match status" value="1"/>
</dbReference>
<dbReference type="InterPro" id="IPR020818">
    <property type="entry name" value="Chaperonin_GroES"/>
</dbReference>
<dbReference type="InterPro" id="IPR037124">
    <property type="entry name" value="Chaperonin_GroES_sf"/>
</dbReference>
<dbReference type="InterPro" id="IPR018369">
    <property type="entry name" value="Chaprnonin_Cpn10_CS"/>
</dbReference>
<dbReference type="InterPro" id="IPR011032">
    <property type="entry name" value="GroES-like_sf"/>
</dbReference>
<dbReference type="NCBIfam" id="NF001535">
    <property type="entry name" value="PRK00364.3-1"/>
    <property type="match status" value="1"/>
</dbReference>
<dbReference type="NCBIfam" id="NF001537">
    <property type="entry name" value="PRK00364.3-3"/>
    <property type="match status" value="1"/>
</dbReference>
<dbReference type="PANTHER" id="PTHR10772">
    <property type="entry name" value="10 KDA HEAT SHOCK PROTEIN"/>
    <property type="match status" value="1"/>
</dbReference>
<dbReference type="PANTHER" id="PTHR10772:SF58">
    <property type="entry name" value="CO-CHAPERONIN GROES"/>
    <property type="match status" value="1"/>
</dbReference>
<dbReference type="Pfam" id="PF00166">
    <property type="entry name" value="Cpn10"/>
    <property type="match status" value="1"/>
</dbReference>
<dbReference type="PRINTS" id="PR00297">
    <property type="entry name" value="CHAPERONIN10"/>
</dbReference>
<dbReference type="SMART" id="SM00883">
    <property type="entry name" value="Cpn10"/>
    <property type="match status" value="1"/>
</dbReference>
<dbReference type="SUPFAM" id="SSF50129">
    <property type="entry name" value="GroES-like"/>
    <property type="match status" value="1"/>
</dbReference>
<dbReference type="PROSITE" id="PS00681">
    <property type="entry name" value="CHAPERONINS_CPN10"/>
    <property type="match status" value="1"/>
</dbReference>